<organism>
    <name type="scientific">Clostridium perfringens (strain 13 / Type A)</name>
    <dbReference type="NCBI Taxonomy" id="195102"/>
    <lineage>
        <taxon>Bacteria</taxon>
        <taxon>Bacillati</taxon>
        <taxon>Bacillota</taxon>
        <taxon>Clostridia</taxon>
        <taxon>Eubacteriales</taxon>
        <taxon>Clostridiaceae</taxon>
        <taxon>Clostridium</taxon>
    </lineage>
</organism>
<keyword id="KW-0489">Methyltransferase</keyword>
<keyword id="KW-1185">Reference proteome</keyword>
<keyword id="KW-0949">S-adenosyl-L-methionine</keyword>
<keyword id="KW-0808">Transferase</keyword>
<keyword id="KW-0819">tRNA processing</keyword>
<gene>
    <name evidence="1" type="primary">trmB</name>
    <name type="ordered locus">CPE0424</name>
</gene>
<reference key="1">
    <citation type="journal article" date="2002" name="Proc. Natl. Acad. Sci. U.S.A.">
        <title>Complete genome sequence of Clostridium perfringens, an anaerobic flesh-eater.</title>
        <authorList>
            <person name="Shimizu T."/>
            <person name="Ohtani K."/>
            <person name="Hirakawa H."/>
            <person name="Ohshima K."/>
            <person name="Yamashita A."/>
            <person name="Shiba T."/>
            <person name="Ogasawara N."/>
            <person name="Hattori M."/>
            <person name="Kuhara S."/>
            <person name="Hayashi H."/>
        </authorList>
    </citation>
    <scope>NUCLEOTIDE SEQUENCE [LARGE SCALE GENOMIC DNA]</scope>
    <source>
        <strain>13 / Type A</strain>
    </source>
</reference>
<comment type="function">
    <text evidence="1">Catalyzes the formation of N(7)-methylguanine at position 46 (m7G46) in tRNA.</text>
</comment>
<comment type="catalytic activity">
    <reaction evidence="1">
        <text>guanosine(46) in tRNA + S-adenosyl-L-methionine = N(7)-methylguanosine(46) in tRNA + S-adenosyl-L-homocysteine</text>
        <dbReference type="Rhea" id="RHEA:42708"/>
        <dbReference type="Rhea" id="RHEA-COMP:10188"/>
        <dbReference type="Rhea" id="RHEA-COMP:10189"/>
        <dbReference type="ChEBI" id="CHEBI:57856"/>
        <dbReference type="ChEBI" id="CHEBI:59789"/>
        <dbReference type="ChEBI" id="CHEBI:74269"/>
        <dbReference type="ChEBI" id="CHEBI:74480"/>
        <dbReference type="EC" id="2.1.1.33"/>
    </reaction>
</comment>
<comment type="pathway">
    <text evidence="1">tRNA modification; N(7)-methylguanine-tRNA biosynthesis.</text>
</comment>
<comment type="similarity">
    <text evidence="1">Belongs to the class I-like SAM-binding methyltransferase superfamily. TrmB family.</text>
</comment>
<feature type="chain" id="PRO_0000171320" description="tRNA (guanine-N(7)-)-methyltransferase">
    <location>
        <begin position="1"/>
        <end position="219"/>
    </location>
</feature>
<feature type="binding site" evidence="1">
    <location>
        <position position="44"/>
    </location>
    <ligand>
        <name>S-adenosyl-L-methionine</name>
        <dbReference type="ChEBI" id="CHEBI:59789"/>
    </ligand>
</feature>
<feature type="binding site" evidence="1">
    <location>
        <position position="69"/>
    </location>
    <ligand>
        <name>S-adenosyl-L-methionine</name>
        <dbReference type="ChEBI" id="CHEBI:59789"/>
    </ligand>
</feature>
<feature type="binding site" evidence="1">
    <location>
        <position position="102"/>
    </location>
    <ligand>
        <name>S-adenosyl-L-methionine</name>
        <dbReference type="ChEBI" id="CHEBI:59789"/>
    </ligand>
</feature>
<feature type="binding site" evidence="1">
    <location>
        <position position="125"/>
    </location>
    <ligand>
        <name>S-adenosyl-L-methionine</name>
        <dbReference type="ChEBI" id="CHEBI:59789"/>
    </ligand>
</feature>
<feature type="binding site" evidence="1">
    <location>
        <position position="129"/>
    </location>
    <ligand>
        <name>substrate</name>
    </ligand>
</feature>
<feature type="binding site" evidence="1">
    <location>
        <position position="161"/>
    </location>
    <ligand>
        <name>substrate</name>
    </ligand>
</feature>
<accession>Q8XNB4</accession>
<sequence>MRMRRKPWARPELEACDFFVANPKENKGNWKNTFKNTENPIYLELGCGKGTFMAVHGSDNPNINYIAIDIKDEVLVLAKRSIEKAYEEKNKALDNVKLMPQEIALIDTILDSNDKIERIYINFCNPWPKDRHKKRRLTHTRQLTKYRDFLVDGGEIHFKTDDDELFEESLEYFKECNFEITYITRDLHNSGYEYNVVTEHEEMFSKQGIKIKFLIAKKL</sequence>
<proteinExistence type="inferred from homology"/>
<name>TRMB_CLOPE</name>
<protein>
    <recommendedName>
        <fullName evidence="1">tRNA (guanine-N(7)-)-methyltransferase</fullName>
        <ecNumber evidence="1">2.1.1.33</ecNumber>
    </recommendedName>
    <alternativeName>
        <fullName evidence="1">tRNA (guanine(46)-N(7))-methyltransferase</fullName>
    </alternativeName>
    <alternativeName>
        <fullName evidence="1">tRNA(m7G46)-methyltransferase</fullName>
    </alternativeName>
</protein>
<dbReference type="EC" id="2.1.1.33" evidence="1"/>
<dbReference type="EMBL" id="BA000016">
    <property type="protein sequence ID" value="BAB80130.1"/>
    <property type="molecule type" value="Genomic_DNA"/>
</dbReference>
<dbReference type="RefSeq" id="WP_011009802.1">
    <property type="nucleotide sequence ID" value="NC_003366.1"/>
</dbReference>
<dbReference type="SMR" id="Q8XNB4"/>
<dbReference type="STRING" id="195102.gene:10489680"/>
<dbReference type="KEGG" id="cpe:CPE0424"/>
<dbReference type="HOGENOM" id="CLU_050910_2_1_9"/>
<dbReference type="UniPathway" id="UPA00989"/>
<dbReference type="Proteomes" id="UP000000818">
    <property type="component" value="Chromosome"/>
</dbReference>
<dbReference type="GO" id="GO:0043527">
    <property type="term" value="C:tRNA methyltransferase complex"/>
    <property type="evidence" value="ECO:0007669"/>
    <property type="project" value="TreeGrafter"/>
</dbReference>
<dbReference type="GO" id="GO:0008176">
    <property type="term" value="F:tRNA (guanine(46)-N7)-methyltransferase activity"/>
    <property type="evidence" value="ECO:0007669"/>
    <property type="project" value="UniProtKB-UniRule"/>
</dbReference>
<dbReference type="Gene3D" id="3.40.50.150">
    <property type="entry name" value="Vaccinia Virus protein VP39"/>
    <property type="match status" value="1"/>
</dbReference>
<dbReference type="HAMAP" id="MF_01057">
    <property type="entry name" value="tRNA_methyltr_TrmB"/>
    <property type="match status" value="1"/>
</dbReference>
<dbReference type="InterPro" id="IPR029063">
    <property type="entry name" value="SAM-dependent_MTases_sf"/>
</dbReference>
<dbReference type="InterPro" id="IPR003358">
    <property type="entry name" value="tRNA_(Gua-N-7)_MeTrfase_Trmb"/>
</dbReference>
<dbReference type="InterPro" id="IPR055361">
    <property type="entry name" value="tRNA_methyltr_TrmB_bact"/>
</dbReference>
<dbReference type="NCBIfam" id="NF001080">
    <property type="entry name" value="PRK00121.2-2"/>
    <property type="match status" value="1"/>
</dbReference>
<dbReference type="NCBIfam" id="TIGR00091">
    <property type="entry name" value="tRNA (guanosine(46)-N7)-methyltransferase TrmB"/>
    <property type="match status" value="1"/>
</dbReference>
<dbReference type="PANTHER" id="PTHR23417">
    <property type="entry name" value="3-DEOXY-D-MANNO-OCTULOSONIC-ACID TRANSFERASE/TRNA GUANINE-N 7 - -METHYLTRANSFERASE"/>
    <property type="match status" value="1"/>
</dbReference>
<dbReference type="PANTHER" id="PTHR23417:SF14">
    <property type="entry name" value="PENTACOTRIPEPTIDE-REPEAT REGION OF PRORP DOMAIN-CONTAINING PROTEIN"/>
    <property type="match status" value="1"/>
</dbReference>
<dbReference type="Pfam" id="PF02390">
    <property type="entry name" value="Methyltransf_4"/>
    <property type="match status" value="1"/>
</dbReference>
<dbReference type="SUPFAM" id="SSF53335">
    <property type="entry name" value="S-adenosyl-L-methionine-dependent methyltransferases"/>
    <property type="match status" value="1"/>
</dbReference>
<dbReference type="PROSITE" id="PS51625">
    <property type="entry name" value="SAM_MT_TRMB"/>
    <property type="match status" value="1"/>
</dbReference>
<evidence type="ECO:0000255" key="1">
    <source>
        <dbReference type="HAMAP-Rule" id="MF_01057"/>
    </source>
</evidence>